<proteinExistence type="inferred from homology"/>
<accession>P59409</accession>
<evidence type="ECO:0000255" key="1">
    <source>
        <dbReference type="HAMAP-Rule" id="MF_00627"/>
    </source>
</evidence>
<name>TDH_SHIFL</name>
<comment type="function">
    <text evidence="1">Catalyzes the NAD(+)-dependent oxidation of L-threonine to 2-amino-3-ketobutyrate.</text>
</comment>
<comment type="catalytic activity">
    <reaction evidence="1">
        <text>L-threonine + NAD(+) = (2S)-2-amino-3-oxobutanoate + NADH + H(+)</text>
        <dbReference type="Rhea" id="RHEA:13161"/>
        <dbReference type="ChEBI" id="CHEBI:15378"/>
        <dbReference type="ChEBI" id="CHEBI:57540"/>
        <dbReference type="ChEBI" id="CHEBI:57926"/>
        <dbReference type="ChEBI" id="CHEBI:57945"/>
        <dbReference type="ChEBI" id="CHEBI:78948"/>
        <dbReference type="EC" id="1.1.1.103"/>
    </reaction>
</comment>
<comment type="cofactor">
    <cofactor evidence="1">
        <name>Zn(2+)</name>
        <dbReference type="ChEBI" id="CHEBI:29105"/>
    </cofactor>
    <text evidence="1">Binds 2 Zn(2+) ions per subunit.</text>
</comment>
<comment type="pathway">
    <text evidence="1">Amino-acid degradation; L-threonine degradation via oxydo-reductase pathway; glycine from L-threonine: step 1/2.</text>
</comment>
<comment type="subunit">
    <text evidence="1">Homotetramer.</text>
</comment>
<comment type="subcellular location">
    <subcellularLocation>
        <location evidence="1">Cytoplasm</location>
    </subcellularLocation>
</comment>
<comment type="similarity">
    <text evidence="1">Belongs to the zinc-containing alcohol dehydrogenase family.</text>
</comment>
<reference key="1">
    <citation type="journal article" date="2002" name="Nucleic Acids Res.">
        <title>Genome sequence of Shigella flexneri 2a: insights into pathogenicity through comparison with genomes of Escherichia coli K12 and O157.</title>
        <authorList>
            <person name="Jin Q."/>
            <person name="Yuan Z."/>
            <person name="Xu J."/>
            <person name="Wang Y."/>
            <person name="Shen Y."/>
            <person name="Lu W."/>
            <person name="Wang J."/>
            <person name="Liu H."/>
            <person name="Yang J."/>
            <person name="Yang F."/>
            <person name="Zhang X."/>
            <person name="Zhang J."/>
            <person name="Yang G."/>
            <person name="Wu H."/>
            <person name="Qu D."/>
            <person name="Dong J."/>
            <person name="Sun L."/>
            <person name="Xue Y."/>
            <person name="Zhao A."/>
            <person name="Gao Y."/>
            <person name="Zhu J."/>
            <person name="Kan B."/>
            <person name="Ding K."/>
            <person name="Chen S."/>
            <person name="Cheng H."/>
            <person name="Yao Z."/>
            <person name="He B."/>
            <person name="Chen R."/>
            <person name="Ma D."/>
            <person name="Qiang B."/>
            <person name="Wen Y."/>
            <person name="Hou Y."/>
            <person name="Yu J."/>
        </authorList>
    </citation>
    <scope>NUCLEOTIDE SEQUENCE [LARGE SCALE GENOMIC DNA]</scope>
    <source>
        <strain>301 / Serotype 2a</strain>
    </source>
</reference>
<reference key="2">
    <citation type="journal article" date="2003" name="Infect. Immun.">
        <title>Complete genome sequence and comparative genomics of Shigella flexneri serotype 2a strain 2457T.</title>
        <authorList>
            <person name="Wei J."/>
            <person name="Goldberg M.B."/>
            <person name="Burland V."/>
            <person name="Venkatesan M.M."/>
            <person name="Deng W."/>
            <person name="Fournier G."/>
            <person name="Mayhew G.F."/>
            <person name="Plunkett G. III"/>
            <person name="Rose D.J."/>
            <person name="Darling A."/>
            <person name="Mau B."/>
            <person name="Perna N.T."/>
            <person name="Payne S.M."/>
            <person name="Runyen-Janecky L.J."/>
            <person name="Zhou S."/>
            <person name="Schwartz D.C."/>
            <person name="Blattner F.R."/>
        </authorList>
    </citation>
    <scope>NUCLEOTIDE SEQUENCE [LARGE SCALE GENOMIC DNA]</scope>
    <source>
        <strain>ATCC 700930 / 2457T / Serotype 2a</strain>
    </source>
</reference>
<protein>
    <recommendedName>
        <fullName evidence="1">L-threonine 3-dehydrogenase</fullName>
        <shortName evidence="1">TDH</shortName>
        <ecNumber evidence="1">1.1.1.103</ecNumber>
    </recommendedName>
</protein>
<sequence length="341" mass="37255">MKALSKLKAEEGIWMTDVPVPELGHNDLLIKIRKTAICGTDVHIYNWDEWSQKTIPVPMVVGHEYVGEVVGIGQEVKGFKIGDRVSGEGHITCGHCRNCRGGRTHLCRNTIGVGVNRPGCFAEYLVIPAFNAFKIPDNISDDLASIFDPFGNAVHTALSFDLVGEDVLVSGAGPIGIMAAAVAKHVGARNVVITDVNEYRLELARKMGITRAVNVAKENLNDVMAELGMTEGFDVGLEMSGAPPAFRTMLDTMNHGGRIAMLGIPPSDMSIDWTKVIFKGLFIKGIYGREMFETWYKMAALIQSGLDLSPIITHRFSIDDFQKGFDAMRSGQSGKVILSWD</sequence>
<organism>
    <name type="scientific">Shigella flexneri</name>
    <dbReference type="NCBI Taxonomy" id="623"/>
    <lineage>
        <taxon>Bacteria</taxon>
        <taxon>Pseudomonadati</taxon>
        <taxon>Pseudomonadota</taxon>
        <taxon>Gammaproteobacteria</taxon>
        <taxon>Enterobacterales</taxon>
        <taxon>Enterobacteriaceae</taxon>
        <taxon>Shigella</taxon>
    </lineage>
</organism>
<feature type="chain" id="PRO_0000160857" description="L-threonine 3-dehydrogenase">
    <location>
        <begin position="1"/>
        <end position="341"/>
    </location>
</feature>
<feature type="active site" description="Charge relay system" evidence="1">
    <location>
        <position position="40"/>
    </location>
</feature>
<feature type="active site" description="Charge relay system" evidence="1">
    <location>
        <position position="43"/>
    </location>
</feature>
<feature type="binding site" evidence="1">
    <location>
        <position position="38"/>
    </location>
    <ligand>
        <name>Zn(2+)</name>
        <dbReference type="ChEBI" id="CHEBI:29105"/>
        <label>1</label>
        <note>catalytic</note>
    </ligand>
</feature>
<feature type="binding site" evidence="1">
    <location>
        <position position="63"/>
    </location>
    <ligand>
        <name>Zn(2+)</name>
        <dbReference type="ChEBI" id="CHEBI:29105"/>
        <label>1</label>
        <note>catalytic</note>
    </ligand>
</feature>
<feature type="binding site" evidence="1">
    <location>
        <position position="64"/>
    </location>
    <ligand>
        <name>Zn(2+)</name>
        <dbReference type="ChEBI" id="CHEBI:29105"/>
        <label>1</label>
        <note>catalytic</note>
    </ligand>
</feature>
<feature type="binding site" evidence="1">
    <location>
        <position position="93"/>
    </location>
    <ligand>
        <name>Zn(2+)</name>
        <dbReference type="ChEBI" id="CHEBI:29105"/>
        <label>2</label>
    </ligand>
</feature>
<feature type="binding site" evidence="1">
    <location>
        <position position="96"/>
    </location>
    <ligand>
        <name>Zn(2+)</name>
        <dbReference type="ChEBI" id="CHEBI:29105"/>
        <label>2</label>
    </ligand>
</feature>
<feature type="binding site" evidence="1">
    <location>
        <position position="99"/>
    </location>
    <ligand>
        <name>Zn(2+)</name>
        <dbReference type="ChEBI" id="CHEBI:29105"/>
        <label>2</label>
    </ligand>
</feature>
<feature type="binding site" evidence="1">
    <location>
        <position position="107"/>
    </location>
    <ligand>
        <name>Zn(2+)</name>
        <dbReference type="ChEBI" id="CHEBI:29105"/>
        <label>2</label>
    </ligand>
</feature>
<feature type="binding site" evidence="1">
    <location>
        <position position="175"/>
    </location>
    <ligand>
        <name>NAD(+)</name>
        <dbReference type="ChEBI" id="CHEBI:57540"/>
    </ligand>
</feature>
<feature type="binding site" evidence="1">
    <location>
        <position position="195"/>
    </location>
    <ligand>
        <name>NAD(+)</name>
        <dbReference type="ChEBI" id="CHEBI:57540"/>
    </ligand>
</feature>
<feature type="binding site" evidence="1">
    <location>
        <position position="200"/>
    </location>
    <ligand>
        <name>NAD(+)</name>
        <dbReference type="ChEBI" id="CHEBI:57540"/>
    </ligand>
</feature>
<feature type="binding site" evidence="1">
    <location>
        <begin position="262"/>
        <end position="264"/>
    </location>
    <ligand>
        <name>NAD(+)</name>
        <dbReference type="ChEBI" id="CHEBI:57540"/>
    </ligand>
</feature>
<feature type="binding site" evidence="1">
    <location>
        <begin position="286"/>
        <end position="287"/>
    </location>
    <ligand>
        <name>NAD(+)</name>
        <dbReference type="ChEBI" id="CHEBI:57540"/>
    </ligand>
</feature>
<feature type="site" description="Important for catalytic activity for the proton relay mechanism but does not participate directly in the coordination of zinc atom" evidence="1">
    <location>
        <position position="148"/>
    </location>
</feature>
<gene>
    <name evidence="1" type="primary">tdh</name>
    <name type="ordered locus">SF3656</name>
    <name type="ordered locus">S4111</name>
</gene>
<dbReference type="EC" id="1.1.1.103" evidence="1"/>
<dbReference type="EMBL" id="AE005674">
    <property type="protein sequence ID" value="AAN45103.1"/>
    <property type="molecule type" value="Genomic_DNA"/>
</dbReference>
<dbReference type="EMBL" id="AE014073">
    <property type="protein sequence ID" value="AAP19088.1"/>
    <property type="molecule type" value="Genomic_DNA"/>
</dbReference>
<dbReference type="RefSeq" id="NP_709396.1">
    <property type="nucleotide sequence ID" value="NC_004337.2"/>
</dbReference>
<dbReference type="RefSeq" id="WP_000646014.1">
    <property type="nucleotide sequence ID" value="NZ_WPGW01000260.1"/>
</dbReference>
<dbReference type="SMR" id="P59409"/>
<dbReference type="STRING" id="198214.SF3656"/>
<dbReference type="PaxDb" id="198214-SF3656"/>
<dbReference type="GeneID" id="1026270"/>
<dbReference type="GeneID" id="93778332"/>
<dbReference type="KEGG" id="sfl:SF3656"/>
<dbReference type="KEGG" id="sfx:S4111"/>
<dbReference type="PATRIC" id="fig|198214.7.peg.4318"/>
<dbReference type="HOGENOM" id="CLU_026673_11_0_6"/>
<dbReference type="UniPathway" id="UPA00046">
    <property type="reaction ID" value="UER00505"/>
</dbReference>
<dbReference type="Proteomes" id="UP000001006">
    <property type="component" value="Chromosome"/>
</dbReference>
<dbReference type="Proteomes" id="UP000002673">
    <property type="component" value="Chromosome"/>
</dbReference>
<dbReference type="GO" id="GO:0005737">
    <property type="term" value="C:cytoplasm"/>
    <property type="evidence" value="ECO:0007669"/>
    <property type="project" value="UniProtKB-SubCell"/>
</dbReference>
<dbReference type="GO" id="GO:0008743">
    <property type="term" value="F:L-threonine 3-dehydrogenase activity"/>
    <property type="evidence" value="ECO:0007669"/>
    <property type="project" value="UniProtKB-UniRule"/>
</dbReference>
<dbReference type="GO" id="GO:0008270">
    <property type="term" value="F:zinc ion binding"/>
    <property type="evidence" value="ECO:0007669"/>
    <property type="project" value="UniProtKB-UniRule"/>
</dbReference>
<dbReference type="GO" id="GO:0019518">
    <property type="term" value="P:L-threonine catabolic process to glycine"/>
    <property type="evidence" value="ECO:0007669"/>
    <property type="project" value="UniProtKB-UniPathway"/>
</dbReference>
<dbReference type="FunFam" id="3.40.50.720:FF:000059">
    <property type="entry name" value="L-threonine 3-dehydrogenase"/>
    <property type="match status" value="1"/>
</dbReference>
<dbReference type="Gene3D" id="3.90.180.10">
    <property type="entry name" value="Medium-chain alcohol dehydrogenases, catalytic domain"/>
    <property type="match status" value="1"/>
</dbReference>
<dbReference type="Gene3D" id="3.40.50.720">
    <property type="entry name" value="NAD(P)-binding Rossmann-like Domain"/>
    <property type="match status" value="1"/>
</dbReference>
<dbReference type="HAMAP" id="MF_00627">
    <property type="entry name" value="Thr_dehydrog"/>
    <property type="match status" value="1"/>
</dbReference>
<dbReference type="InterPro" id="IPR013149">
    <property type="entry name" value="ADH-like_C"/>
</dbReference>
<dbReference type="InterPro" id="IPR013154">
    <property type="entry name" value="ADH-like_N"/>
</dbReference>
<dbReference type="InterPro" id="IPR002328">
    <property type="entry name" value="ADH_Zn_CS"/>
</dbReference>
<dbReference type="InterPro" id="IPR011032">
    <property type="entry name" value="GroES-like_sf"/>
</dbReference>
<dbReference type="InterPro" id="IPR004627">
    <property type="entry name" value="L-Threonine_3-DHase"/>
</dbReference>
<dbReference type="InterPro" id="IPR036291">
    <property type="entry name" value="NAD(P)-bd_dom_sf"/>
</dbReference>
<dbReference type="InterPro" id="IPR020843">
    <property type="entry name" value="PKS_ER"/>
</dbReference>
<dbReference type="InterPro" id="IPR050129">
    <property type="entry name" value="Zn_alcohol_dh"/>
</dbReference>
<dbReference type="NCBIfam" id="NF003808">
    <property type="entry name" value="PRK05396.1"/>
    <property type="match status" value="1"/>
</dbReference>
<dbReference type="NCBIfam" id="TIGR00692">
    <property type="entry name" value="tdh"/>
    <property type="match status" value="1"/>
</dbReference>
<dbReference type="PANTHER" id="PTHR43401">
    <property type="entry name" value="L-THREONINE 3-DEHYDROGENASE"/>
    <property type="match status" value="1"/>
</dbReference>
<dbReference type="PANTHER" id="PTHR43401:SF2">
    <property type="entry name" value="L-THREONINE 3-DEHYDROGENASE"/>
    <property type="match status" value="1"/>
</dbReference>
<dbReference type="Pfam" id="PF08240">
    <property type="entry name" value="ADH_N"/>
    <property type="match status" value="1"/>
</dbReference>
<dbReference type="Pfam" id="PF00107">
    <property type="entry name" value="ADH_zinc_N"/>
    <property type="match status" value="1"/>
</dbReference>
<dbReference type="SMART" id="SM00829">
    <property type="entry name" value="PKS_ER"/>
    <property type="match status" value="1"/>
</dbReference>
<dbReference type="SUPFAM" id="SSF50129">
    <property type="entry name" value="GroES-like"/>
    <property type="match status" value="1"/>
</dbReference>
<dbReference type="SUPFAM" id="SSF51735">
    <property type="entry name" value="NAD(P)-binding Rossmann-fold domains"/>
    <property type="match status" value="1"/>
</dbReference>
<dbReference type="PROSITE" id="PS00059">
    <property type="entry name" value="ADH_ZINC"/>
    <property type="match status" value="1"/>
</dbReference>
<keyword id="KW-0963">Cytoplasm</keyword>
<keyword id="KW-0479">Metal-binding</keyword>
<keyword id="KW-0520">NAD</keyword>
<keyword id="KW-0560">Oxidoreductase</keyword>
<keyword id="KW-1185">Reference proteome</keyword>
<keyword id="KW-0862">Zinc</keyword>